<sequence>MSNESSKKQSSKKALFDPVSFSKDLLAGGVAAAVSKTAVAPIERVKLLLQVQASSKQISPEARYKGMLDCLVRIPREQGFLSYWRGNLANVIRYFPTQALNFAFKDKYKELFMSGVNKEKQFWRWFLANLASGGAAGATSLCVVYPLDFARTRLGVDIGKGPEQRQFTGLGDCIMKIAKSDGLIGLYQGFGVSVQGIIVYRASYFGAYDTVKGLLPKPKETPFLVSFIIAQIVTTCSGILSYPFDTVRRRMMMQSGESDRQYKGTIDCFLKIYRHEGVPAFFRGAFSNILRGTGGALVLVLYDKIKEFLNIDVGGSSSGD</sequence>
<name>ADT4_MOUSE</name>
<evidence type="ECO:0000250" key="1">
    <source>
        <dbReference type="UniProtKB" id="G2QNH0"/>
    </source>
</evidence>
<evidence type="ECO:0000250" key="2">
    <source>
        <dbReference type="UniProtKB" id="P02722"/>
    </source>
</evidence>
<evidence type="ECO:0000250" key="3">
    <source>
        <dbReference type="UniProtKB" id="P12235"/>
    </source>
</evidence>
<evidence type="ECO:0000250" key="4">
    <source>
        <dbReference type="UniProtKB" id="P48962"/>
    </source>
</evidence>
<evidence type="ECO:0000250" key="5">
    <source>
        <dbReference type="UniProtKB" id="Q9H0C2"/>
    </source>
</evidence>
<evidence type="ECO:0000255" key="6"/>
<evidence type="ECO:0000269" key="7">
    <source>
    </source>
</evidence>
<evidence type="ECO:0000269" key="8">
    <source>
    </source>
</evidence>
<evidence type="ECO:0000269" key="9">
    <source>
    </source>
</evidence>
<evidence type="ECO:0000269" key="10">
    <source>
    </source>
</evidence>
<evidence type="ECO:0000269" key="11">
    <source>
    </source>
</evidence>
<evidence type="ECO:0000269" key="12">
    <source>
    </source>
</evidence>
<evidence type="ECO:0000303" key="13">
    <source>
    </source>
</evidence>
<evidence type="ECO:0000303" key="14">
    <source>
    </source>
</evidence>
<evidence type="ECO:0000303" key="15">
    <source>
    </source>
</evidence>
<evidence type="ECO:0000305" key="16"/>
<evidence type="ECO:0000312" key="17">
    <source>
        <dbReference type="MGI" id="MGI:1920583"/>
    </source>
</evidence>
<gene>
    <name evidence="15 17" type="primary">Slc25a31</name>
    <name evidence="13" type="synonym">Aac4</name>
    <name evidence="14" type="synonym">Ant4</name>
    <name evidence="13" type="synonym">Sfec</name>
</gene>
<reference key="1">
    <citation type="journal article" date="2007" name="Dev. Biol.">
        <title>Compartmentalization of a unique ADP/ATP carrier protein SFEC (sperm flagellar energy carrier, AAC4) with glycolytic enzymes in the fibrous sheath of the human sperm flagellar principal piece.</title>
        <authorList>
            <person name="Kim Y.-H."/>
            <person name="Haidl G."/>
            <person name="Schaefer M."/>
            <person name="Egner U."/>
            <person name="Mandal A."/>
            <person name="Herr J.C."/>
        </authorList>
    </citation>
    <scope>NUCLEOTIDE SEQUENCE [MRNA]</scope>
    <scope>FUNCTION</scope>
    <scope>SUBCELLULAR LOCATION</scope>
</reference>
<reference key="2">
    <citation type="journal article" date="2005" name="Science">
        <title>The transcriptional landscape of the mammalian genome.</title>
        <authorList>
            <person name="Carninci P."/>
            <person name="Kasukawa T."/>
            <person name="Katayama S."/>
            <person name="Gough J."/>
            <person name="Frith M.C."/>
            <person name="Maeda N."/>
            <person name="Oyama R."/>
            <person name="Ravasi T."/>
            <person name="Lenhard B."/>
            <person name="Wells C."/>
            <person name="Kodzius R."/>
            <person name="Shimokawa K."/>
            <person name="Bajic V.B."/>
            <person name="Brenner S.E."/>
            <person name="Batalov S."/>
            <person name="Forrest A.R."/>
            <person name="Zavolan M."/>
            <person name="Davis M.J."/>
            <person name="Wilming L.G."/>
            <person name="Aidinis V."/>
            <person name="Allen J.E."/>
            <person name="Ambesi-Impiombato A."/>
            <person name="Apweiler R."/>
            <person name="Aturaliya R.N."/>
            <person name="Bailey T.L."/>
            <person name="Bansal M."/>
            <person name="Baxter L."/>
            <person name="Beisel K.W."/>
            <person name="Bersano T."/>
            <person name="Bono H."/>
            <person name="Chalk A.M."/>
            <person name="Chiu K.P."/>
            <person name="Choudhary V."/>
            <person name="Christoffels A."/>
            <person name="Clutterbuck D.R."/>
            <person name="Crowe M.L."/>
            <person name="Dalla E."/>
            <person name="Dalrymple B.P."/>
            <person name="de Bono B."/>
            <person name="Della Gatta G."/>
            <person name="di Bernardo D."/>
            <person name="Down T."/>
            <person name="Engstrom P."/>
            <person name="Fagiolini M."/>
            <person name="Faulkner G."/>
            <person name="Fletcher C.F."/>
            <person name="Fukushima T."/>
            <person name="Furuno M."/>
            <person name="Futaki S."/>
            <person name="Gariboldi M."/>
            <person name="Georgii-Hemming P."/>
            <person name="Gingeras T.R."/>
            <person name="Gojobori T."/>
            <person name="Green R.E."/>
            <person name="Gustincich S."/>
            <person name="Harbers M."/>
            <person name="Hayashi Y."/>
            <person name="Hensch T.K."/>
            <person name="Hirokawa N."/>
            <person name="Hill D."/>
            <person name="Huminiecki L."/>
            <person name="Iacono M."/>
            <person name="Ikeo K."/>
            <person name="Iwama A."/>
            <person name="Ishikawa T."/>
            <person name="Jakt M."/>
            <person name="Kanapin A."/>
            <person name="Katoh M."/>
            <person name="Kawasawa Y."/>
            <person name="Kelso J."/>
            <person name="Kitamura H."/>
            <person name="Kitano H."/>
            <person name="Kollias G."/>
            <person name="Krishnan S.P."/>
            <person name="Kruger A."/>
            <person name="Kummerfeld S.K."/>
            <person name="Kurochkin I.V."/>
            <person name="Lareau L.F."/>
            <person name="Lazarevic D."/>
            <person name="Lipovich L."/>
            <person name="Liu J."/>
            <person name="Liuni S."/>
            <person name="McWilliam S."/>
            <person name="Madan Babu M."/>
            <person name="Madera M."/>
            <person name="Marchionni L."/>
            <person name="Matsuda H."/>
            <person name="Matsuzawa S."/>
            <person name="Miki H."/>
            <person name="Mignone F."/>
            <person name="Miyake S."/>
            <person name="Morris K."/>
            <person name="Mottagui-Tabar S."/>
            <person name="Mulder N."/>
            <person name="Nakano N."/>
            <person name="Nakauchi H."/>
            <person name="Ng P."/>
            <person name="Nilsson R."/>
            <person name="Nishiguchi S."/>
            <person name="Nishikawa S."/>
            <person name="Nori F."/>
            <person name="Ohara O."/>
            <person name="Okazaki Y."/>
            <person name="Orlando V."/>
            <person name="Pang K.C."/>
            <person name="Pavan W.J."/>
            <person name="Pavesi G."/>
            <person name="Pesole G."/>
            <person name="Petrovsky N."/>
            <person name="Piazza S."/>
            <person name="Reed J."/>
            <person name="Reid J.F."/>
            <person name="Ring B.Z."/>
            <person name="Ringwald M."/>
            <person name="Rost B."/>
            <person name="Ruan Y."/>
            <person name="Salzberg S.L."/>
            <person name="Sandelin A."/>
            <person name="Schneider C."/>
            <person name="Schoenbach C."/>
            <person name="Sekiguchi K."/>
            <person name="Semple C.A."/>
            <person name="Seno S."/>
            <person name="Sessa L."/>
            <person name="Sheng Y."/>
            <person name="Shibata Y."/>
            <person name="Shimada H."/>
            <person name="Shimada K."/>
            <person name="Silva D."/>
            <person name="Sinclair B."/>
            <person name="Sperling S."/>
            <person name="Stupka E."/>
            <person name="Sugiura K."/>
            <person name="Sultana R."/>
            <person name="Takenaka Y."/>
            <person name="Taki K."/>
            <person name="Tammoja K."/>
            <person name="Tan S.L."/>
            <person name="Tang S."/>
            <person name="Taylor M.S."/>
            <person name="Tegner J."/>
            <person name="Teichmann S.A."/>
            <person name="Ueda H.R."/>
            <person name="van Nimwegen E."/>
            <person name="Verardo R."/>
            <person name="Wei C.L."/>
            <person name="Yagi K."/>
            <person name="Yamanishi H."/>
            <person name="Zabarovsky E."/>
            <person name="Zhu S."/>
            <person name="Zimmer A."/>
            <person name="Hide W."/>
            <person name="Bult C."/>
            <person name="Grimmond S.M."/>
            <person name="Teasdale R.D."/>
            <person name="Liu E.T."/>
            <person name="Brusic V."/>
            <person name="Quackenbush J."/>
            <person name="Wahlestedt C."/>
            <person name="Mattick J.S."/>
            <person name="Hume D.A."/>
            <person name="Kai C."/>
            <person name="Sasaki D."/>
            <person name="Tomaru Y."/>
            <person name="Fukuda S."/>
            <person name="Kanamori-Katayama M."/>
            <person name="Suzuki M."/>
            <person name="Aoki J."/>
            <person name="Arakawa T."/>
            <person name="Iida J."/>
            <person name="Imamura K."/>
            <person name="Itoh M."/>
            <person name="Kato T."/>
            <person name="Kawaji H."/>
            <person name="Kawagashira N."/>
            <person name="Kawashima T."/>
            <person name="Kojima M."/>
            <person name="Kondo S."/>
            <person name="Konno H."/>
            <person name="Nakano K."/>
            <person name="Ninomiya N."/>
            <person name="Nishio T."/>
            <person name="Okada M."/>
            <person name="Plessy C."/>
            <person name="Shibata K."/>
            <person name="Shiraki T."/>
            <person name="Suzuki S."/>
            <person name="Tagami M."/>
            <person name="Waki K."/>
            <person name="Watahiki A."/>
            <person name="Okamura-Oho Y."/>
            <person name="Suzuki H."/>
            <person name="Kawai J."/>
            <person name="Hayashizaki Y."/>
        </authorList>
    </citation>
    <scope>NUCLEOTIDE SEQUENCE [LARGE SCALE MRNA]</scope>
    <source>
        <strain>C57BL/6J</strain>
        <tissue>Testis</tissue>
    </source>
</reference>
<reference key="3">
    <citation type="journal article" date="2004" name="Genome Res.">
        <title>The status, quality, and expansion of the NIH full-length cDNA project: the Mammalian Gene Collection (MGC).</title>
        <authorList>
            <consortium name="The MGC Project Team"/>
        </authorList>
    </citation>
    <scope>NUCLEOTIDE SEQUENCE [LARGE SCALE MRNA]</scope>
    <source>
        <tissue>Testis</tissue>
    </source>
</reference>
<reference key="4">
    <citation type="journal article" date="2005" name="Stem Cells">
        <title>DNA methylation is required for silencing of ant4, an adenine nucleotide translocase selectively expressed in mouse embryonic stem cells and germ cells.</title>
        <authorList>
            <person name="Rodic N."/>
            <person name="Oka M."/>
            <person name="Hamazaki T."/>
            <person name="Murawski M.R."/>
            <person name="Jorgensen M."/>
            <person name="Maatouk D.M."/>
            <person name="Resnick J.L."/>
            <person name="Li E."/>
            <person name="Terada N."/>
        </authorList>
    </citation>
    <scope>TISSUE SPECIFICITY</scope>
</reference>
<reference key="5">
    <citation type="journal article" date="2007" name="J. Biol. Chem.">
        <title>Evolutionarily conserved mammalian adenine nucleotide translocase 4 is essential for spermatogenesis.</title>
        <authorList>
            <person name="Brower J.V."/>
            <person name="Rodic N."/>
            <person name="Seki T."/>
            <person name="Jorgensen M."/>
            <person name="Fliess N."/>
            <person name="Yachnis A.T."/>
            <person name="McCarrey J.R."/>
            <person name="Oh S.P."/>
            <person name="Terada N."/>
        </authorList>
    </citation>
    <scope>FUNCTION</scope>
    <scope>TISSUE SPECIFICITY</scope>
    <scope>DEVELOPMENTAL STAGE</scope>
    <scope>DISRUPTION PHENOTYPE</scope>
</reference>
<reference key="6">
    <citation type="journal article" date="2008" name="Biol. Reprod.">
        <title>A conserved E2F6-binding element in murine meiosis-specific gene promoters.</title>
        <authorList>
            <person name="Kehoe S.M."/>
            <person name="Oka M."/>
            <person name="Hankowski K.E."/>
            <person name="Reichert N."/>
            <person name="Garcia S."/>
            <person name="McCarrey J.R."/>
            <person name="Gaubatz S."/>
            <person name="Terada N."/>
        </authorList>
    </citation>
    <scope>INDUCTION</scope>
</reference>
<reference key="7">
    <citation type="journal article" date="2009" name="Reproduction">
        <title>Adenine nucleotide translocase 4 deficiency leads to early meiotic arrest of murine male germ cells.</title>
        <authorList>
            <person name="Brower J.V."/>
            <person name="Lim C.H."/>
            <person name="Jorgensen M."/>
            <person name="Oh S.P."/>
            <person name="Terada N."/>
        </authorList>
    </citation>
    <scope>FUNCTION</scope>
    <scope>DISRUPTION PHENOTYPE</scope>
</reference>
<reference key="8">
    <citation type="journal article" date="2010" name="Cell">
        <title>A tissue-specific atlas of mouse protein phosphorylation and expression.</title>
        <authorList>
            <person name="Huttlin E.L."/>
            <person name="Jedrychowski M.P."/>
            <person name="Elias J.E."/>
            <person name="Goswami T."/>
            <person name="Rad R."/>
            <person name="Beausoleil S.A."/>
            <person name="Villen J."/>
            <person name="Haas W."/>
            <person name="Sowa M.E."/>
            <person name="Gygi S.P."/>
        </authorList>
    </citation>
    <scope>IDENTIFICATION BY MASS SPECTROMETRY [LARGE SCALE ANALYSIS]</scope>
    <source>
        <tissue>Testis</tissue>
    </source>
</reference>
<reference key="9">
    <citation type="journal article" date="2019" name="Sci. Adv.">
        <title>Inhibition of mitochondrial permeability transition by deletion of the ANT family and CypD.</title>
        <authorList>
            <person name="Karch J."/>
            <person name="Bround M.J."/>
            <person name="Khalil H."/>
            <person name="Sargent M.A."/>
            <person name="Latchman N."/>
            <person name="Terada N."/>
            <person name="Peixoto P.M."/>
            <person name="Molkentin J.D."/>
        </authorList>
    </citation>
    <scope>FUNCTION</scope>
    <scope>DISRUPTION PHENOTYPE</scope>
    <scope>TISSUE SPECIFICITY</scope>
</reference>
<feature type="chain" id="PRO_0000297626" description="ADP/ATP translocase 4">
    <location>
        <begin position="1"/>
        <end position="320"/>
    </location>
</feature>
<feature type="topological domain" description="Mitochondrial intermembrane" evidence="16">
    <location>
        <begin position="1"/>
        <end position="20"/>
    </location>
</feature>
<feature type="transmembrane region" description="Helical; Name=1" evidence="2">
    <location>
        <begin position="21"/>
        <end position="50"/>
    </location>
</feature>
<feature type="topological domain" description="Mitochondrial matrix" evidence="16">
    <location>
        <begin position="51"/>
        <end position="87"/>
    </location>
</feature>
<feature type="transmembrane region" description="Helical; Name=2" evidence="2">
    <location>
        <begin position="88"/>
        <end position="112"/>
    </location>
</feature>
<feature type="topological domain" description="Mitochondrial intermembrane" evidence="16">
    <location>
        <begin position="113"/>
        <end position="122"/>
    </location>
</feature>
<feature type="transmembrane region" description="Helical; Name=3" evidence="2">
    <location>
        <begin position="123"/>
        <end position="143"/>
    </location>
</feature>
<feature type="topological domain" description="Mitochondrial matrix" evidence="16">
    <location>
        <begin position="144"/>
        <end position="191"/>
    </location>
</feature>
<feature type="transmembrane region" description="Helical; Name=4" evidence="2">
    <location>
        <begin position="192"/>
        <end position="212"/>
    </location>
</feature>
<feature type="topological domain" description="Mitochondrial intermembrane" evidence="16">
    <location>
        <begin position="213"/>
        <end position="223"/>
    </location>
</feature>
<feature type="transmembrane region" description="Helical; Name=5" evidence="2">
    <location>
        <begin position="224"/>
        <end position="244"/>
    </location>
</feature>
<feature type="topological domain" description="Mitochondrial matrix" evidence="16">
    <location>
        <begin position="245"/>
        <end position="284"/>
    </location>
</feature>
<feature type="transmembrane region" description="Helical; Name=6" evidence="2">
    <location>
        <begin position="285"/>
        <end position="302"/>
    </location>
</feature>
<feature type="topological domain" description="Mitochondrial intermembrane" evidence="16">
    <location>
        <begin position="303"/>
        <end position="320"/>
    </location>
</feature>
<feature type="repeat" description="Solcar 1">
    <location>
        <begin position="19"/>
        <end position="111"/>
    </location>
</feature>
<feature type="repeat" description="Solcar 2">
    <location>
        <begin position="124"/>
        <end position="214"/>
    </location>
</feature>
<feature type="repeat" description="Solcar 3">
    <location>
        <begin position="221"/>
        <end position="308"/>
    </location>
</feature>
<feature type="region of interest" description="Important for transport activity" evidence="3">
    <location>
        <begin position="248"/>
        <end position="253"/>
    </location>
</feature>
<feature type="short sequence motif" description="Nucleotide carrier signature motif" evidence="2">
    <location>
        <begin position="248"/>
        <end position="253"/>
    </location>
</feature>
<feature type="binding site" evidence="2">
    <location>
        <position position="93"/>
    </location>
    <ligand>
        <name>ADP</name>
        <dbReference type="ChEBI" id="CHEBI:456216"/>
    </ligand>
</feature>
<feature type="binding site" evidence="2">
    <location>
        <position position="105"/>
    </location>
    <ligand>
        <name>ADP</name>
        <dbReference type="ChEBI" id="CHEBI:456216"/>
    </ligand>
</feature>
<feature type="binding site" evidence="2">
    <location>
        <position position="248"/>
    </location>
    <ligand>
        <name>ADP</name>
        <dbReference type="ChEBI" id="CHEBI:456216"/>
    </ligand>
</feature>
<feature type="sequence conflict" description="In Ref. 1; AAT42264 and 3; AAH50810." evidence="16" ref="1 3">
    <original>A</original>
    <variation>T</variation>
    <location>
        <position position="38"/>
    </location>
</feature>
<protein>
    <recommendedName>
        <fullName evidence="16">ADP/ATP translocase 4</fullName>
    </recommendedName>
    <alternativeName>
        <fullName evidence="13">ADP,ATP carrier protein 4</fullName>
    </alternativeName>
    <alternativeName>
        <fullName evidence="14">Adenine nucleotide translocator 4</fullName>
        <shortName evidence="14">ANT 4</shortName>
    </alternativeName>
    <alternativeName>
        <fullName evidence="16">Solute carrier family 25 member 31</fullName>
    </alternativeName>
    <alternativeName>
        <fullName evidence="13">Sperm flagellar energy carrier protein</fullName>
    </alternativeName>
</protein>
<keyword id="KW-0050">Antiport</keyword>
<keyword id="KW-1003">Cell membrane</keyword>
<keyword id="KW-0966">Cell projection</keyword>
<keyword id="KW-0969">Cilium</keyword>
<keyword id="KW-0221">Differentiation</keyword>
<keyword id="KW-0282">Flagellum</keyword>
<keyword id="KW-0472">Membrane</keyword>
<keyword id="KW-0496">Mitochondrion</keyword>
<keyword id="KW-0999">Mitochondrion inner membrane</keyword>
<keyword id="KW-1185">Reference proteome</keyword>
<keyword id="KW-0677">Repeat</keyword>
<keyword id="KW-0744">Spermatogenesis</keyword>
<keyword id="KW-0812">Transmembrane</keyword>
<keyword id="KW-1133">Transmembrane helix</keyword>
<keyword id="KW-0813">Transport</keyword>
<dbReference type="EMBL" id="AY550241">
    <property type="protein sequence ID" value="AAT42264.1"/>
    <property type="molecule type" value="mRNA"/>
</dbReference>
<dbReference type="EMBL" id="AK132722">
    <property type="protein sequence ID" value="BAE21321.1"/>
    <property type="molecule type" value="mRNA"/>
</dbReference>
<dbReference type="EMBL" id="BC050810">
    <property type="protein sequence ID" value="AAH50810.1"/>
    <property type="molecule type" value="mRNA"/>
</dbReference>
<dbReference type="CCDS" id="CCDS17326.1"/>
<dbReference type="RefSeq" id="NP_848473.2">
    <property type="nucleotide sequence ID" value="NM_178386.3"/>
</dbReference>
<dbReference type="SMR" id="Q3V132"/>
<dbReference type="BioGRID" id="215933">
    <property type="interactions" value="6"/>
</dbReference>
<dbReference type="FunCoup" id="Q3V132">
    <property type="interactions" value="938"/>
</dbReference>
<dbReference type="IntAct" id="Q3V132">
    <property type="interactions" value="3"/>
</dbReference>
<dbReference type="MINT" id="Q3V132"/>
<dbReference type="STRING" id="10090.ENSMUSP00000088723"/>
<dbReference type="iPTMnet" id="Q3V132"/>
<dbReference type="PhosphoSitePlus" id="Q3V132"/>
<dbReference type="SwissPalm" id="Q3V132"/>
<dbReference type="jPOST" id="Q3V132"/>
<dbReference type="PaxDb" id="10090-ENSMUSP00000088723"/>
<dbReference type="ProteomicsDB" id="296191"/>
<dbReference type="Antibodypedia" id="3024">
    <property type="antibodies" value="154 antibodies from 24 providers"/>
</dbReference>
<dbReference type="DNASU" id="73333"/>
<dbReference type="Ensembl" id="ENSMUST00000091184.9">
    <property type="protein sequence ID" value="ENSMUSP00000088723.7"/>
    <property type="gene ID" value="ENSMUSG00000069041.9"/>
</dbReference>
<dbReference type="GeneID" id="73333"/>
<dbReference type="KEGG" id="mmu:73333"/>
<dbReference type="UCSC" id="uc008pbi.2">
    <property type="organism name" value="mouse"/>
</dbReference>
<dbReference type="AGR" id="MGI:1920583"/>
<dbReference type="CTD" id="83447"/>
<dbReference type="MGI" id="MGI:1920583">
    <property type="gene designation" value="Slc25a31"/>
</dbReference>
<dbReference type="VEuPathDB" id="HostDB:ENSMUSG00000069041"/>
<dbReference type="eggNOG" id="KOG0749">
    <property type="taxonomic scope" value="Eukaryota"/>
</dbReference>
<dbReference type="GeneTree" id="ENSGT00940000160648"/>
<dbReference type="HOGENOM" id="CLU_015166_12_0_1"/>
<dbReference type="InParanoid" id="Q3V132"/>
<dbReference type="OMA" id="FRGIHHF"/>
<dbReference type="OrthoDB" id="270584at2759"/>
<dbReference type="PhylomeDB" id="Q3V132"/>
<dbReference type="TreeFam" id="TF300743"/>
<dbReference type="BioGRID-ORCS" id="73333">
    <property type="hits" value="4 hits in 76 CRISPR screens"/>
</dbReference>
<dbReference type="ChiTaRS" id="Slc25a31">
    <property type="organism name" value="mouse"/>
</dbReference>
<dbReference type="PRO" id="PR:Q3V132"/>
<dbReference type="Proteomes" id="UP000000589">
    <property type="component" value="Chromosome 3"/>
</dbReference>
<dbReference type="RNAct" id="Q3V132">
    <property type="molecule type" value="protein"/>
</dbReference>
<dbReference type="Bgee" id="ENSMUSG00000069041">
    <property type="expression patterns" value="Expressed in spermatocyte and 29 other cell types or tissues"/>
</dbReference>
<dbReference type="ExpressionAtlas" id="Q3V132">
    <property type="expression patterns" value="baseline and differential"/>
</dbReference>
<dbReference type="GO" id="GO:0005743">
    <property type="term" value="C:mitochondrial inner membrane"/>
    <property type="evidence" value="ECO:0007005"/>
    <property type="project" value="MGI"/>
</dbReference>
<dbReference type="GO" id="GO:0005757">
    <property type="term" value="C:mitochondrial permeability transition pore complex"/>
    <property type="evidence" value="ECO:0000315"/>
    <property type="project" value="UniProtKB"/>
</dbReference>
<dbReference type="GO" id="GO:0005739">
    <property type="term" value="C:mitochondrion"/>
    <property type="evidence" value="ECO:0007005"/>
    <property type="project" value="MGI"/>
</dbReference>
<dbReference type="GO" id="GO:0031514">
    <property type="term" value="C:motile cilium"/>
    <property type="evidence" value="ECO:0007669"/>
    <property type="project" value="UniProtKB-KW"/>
</dbReference>
<dbReference type="GO" id="GO:0005886">
    <property type="term" value="C:plasma membrane"/>
    <property type="evidence" value="ECO:0007669"/>
    <property type="project" value="UniProtKB-KW"/>
</dbReference>
<dbReference type="GO" id="GO:0005471">
    <property type="term" value="F:ATP:ADP antiporter activity"/>
    <property type="evidence" value="ECO:0007669"/>
    <property type="project" value="InterPro"/>
</dbReference>
<dbReference type="GO" id="GO:0030154">
    <property type="term" value="P:cell differentiation"/>
    <property type="evidence" value="ECO:0007669"/>
    <property type="project" value="UniProtKB-KW"/>
</dbReference>
<dbReference type="GO" id="GO:0007141">
    <property type="term" value="P:male meiosis I"/>
    <property type="evidence" value="ECO:0000315"/>
    <property type="project" value="UniProtKB"/>
</dbReference>
<dbReference type="GO" id="GO:0140021">
    <property type="term" value="P:mitochondrial ADP transmembrane transport"/>
    <property type="evidence" value="ECO:0007669"/>
    <property type="project" value="InterPro"/>
</dbReference>
<dbReference type="GO" id="GO:1990544">
    <property type="term" value="P:mitochondrial ATP transmembrane transport"/>
    <property type="evidence" value="ECO:0007669"/>
    <property type="project" value="InterPro"/>
</dbReference>
<dbReference type="GO" id="GO:0046902">
    <property type="term" value="P:regulation of mitochondrial membrane permeability"/>
    <property type="evidence" value="ECO:0000315"/>
    <property type="project" value="UniProtKB"/>
</dbReference>
<dbReference type="GO" id="GO:0007283">
    <property type="term" value="P:spermatogenesis"/>
    <property type="evidence" value="ECO:0000315"/>
    <property type="project" value="UniProtKB"/>
</dbReference>
<dbReference type="FunFam" id="1.50.40.10:FF:000002">
    <property type="entry name" value="Putative ADP/ATP translocase 2-like"/>
    <property type="match status" value="1"/>
</dbReference>
<dbReference type="Gene3D" id="1.50.40.10">
    <property type="entry name" value="Mitochondrial carrier domain"/>
    <property type="match status" value="1"/>
</dbReference>
<dbReference type="InterPro" id="IPR002113">
    <property type="entry name" value="ADT_euk_type"/>
</dbReference>
<dbReference type="InterPro" id="IPR002067">
    <property type="entry name" value="Mit_carrier"/>
</dbReference>
<dbReference type="InterPro" id="IPR018108">
    <property type="entry name" value="Mitochondrial_sb/sol_carrier"/>
</dbReference>
<dbReference type="InterPro" id="IPR023395">
    <property type="entry name" value="Mt_carrier_dom_sf"/>
</dbReference>
<dbReference type="PANTHER" id="PTHR45635">
    <property type="entry name" value="ADP,ATP CARRIER PROTEIN 1-RELATED-RELATED"/>
    <property type="match status" value="1"/>
</dbReference>
<dbReference type="PANTHER" id="PTHR45635:SF40">
    <property type="entry name" value="ADP_ATP TRANSLOCASE 4"/>
    <property type="match status" value="1"/>
</dbReference>
<dbReference type="Pfam" id="PF00153">
    <property type="entry name" value="Mito_carr"/>
    <property type="match status" value="3"/>
</dbReference>
<dbReference type="PRINTS" id="PR00927">
    <property type="entry name" value="ADPTRNSLCASE"/>
</dbReference>
<dbReference type="PRINTS" id="PR00926">
    <property type="entry name" value="MITOCARRIER"/>
</dbReference>
<dbReference type="SUPFAM" id="SSF103506">
    <property type="entry name" value="Mitochondrial carrier"/>
    <property type="match status" value="1"/>
</dbReference>
<dbReference type="PROSITE" id="PS50920">
    <property type="entry name" value="SOLCAR"/>
    <property type="match status" value="3"/>
</dbReference>
<accession>Q3V132</accession>
<accession>Q80W28</accession>
<comment type="function">
    <text evidence="1 4 5 8 9 11 12">ADP:ATP antiporter that mediates import of ADP into the mitochondrial matrix for ATP synthesis, and export of ATP out to fuel the cell (By similarity). Cycles between the cytoplasmic-open state (c-state) and the matrix-open state (m-state): operates by the alternating access mechanism with a single substrate-binding site intermittently exposed to either the cytosolic (c-state) or matrix (m-state) side of the inner mitochondrial membrane (By similarity). Specifically required during spermatogenesis, probably to mediate ADP:ATP exchange in spermatocytes (PubMed:17137571, PubMed:17681941, PubMed:19556438). Large ATP supplies from mitochondria may be critical for normal progression of spermatogenesis during early stages of meiotic prophase I, including DNA double-strand break repair and chromosomal synapsis (PubMed:19556438). In addition to its ADP:ATP antiporter activity, also involved in mitochondrial uncoupling and mitochondrial permeability transition pore (mPTP) activity (PubMed:31489369). Plays a role in mitochondrial uncoupling by acting as a proton transporter: proton transport uncouples the proton flows via the electron transport chain and ATP synthase to reduce the efficiency of ATP production and cause mitochondrial thermogenesis (By similarity). Proton transporter activity is inhibited by ADP:ATP antiporter activity, suggesting that SLC25A31/ANT4 acts as a master regulator of mitochondrial energy output by maintaining a delicate balance between ATP production (ADP:ATP antiporter activity) and thermogenesis (proton transporter activity) (By similarity). Proton transporter activity requires free fatty acids as cofactor, but does not transport it (By similarity). Among nucleotides, may also exchange ADP for dATP and dADP (By similarity). Also plays a key role in mPTP opening, a non-specific pore that enables free passage of the mitochondrial membranes to solutes of up to 1.5 kDa, and which contributes to cell death (PubMed:31489369). It is however unclear if SLC25A31/ANT4 constitutes a pore-forming component of mPTP or regulates it (PubMed:31489369).</text>
</comment>
<comment type="catalytic activity">
    <reaction evidence="4 5">
        <text>ADP(in) + ATP(out) = ADP(out) + ATP(in)</text>
        <dbReference type="Rhea" id="RHEA:34999"/>
        <dbReference type="ChEBI" id="CHEBI:30616"/>
        <dbReference type="ChEBI" id="CHEBI:456216"/>
    </reaction>
    <physiologicalReaction direction="left-to-right" evidence="5">
        <dbReference type="Rhea" id="RHEA:35000"/>
    </physiologicalReaction>
    <physiologicalReaction direction="right-to-left" evidence="5">
        <dbReference type="Rhea" id="RHEA:35001"/>
    </physiologicalReaction>
</comment>
<comment type="catalytic activity">
    <reaction evidence="5">
        <text>dATP(out) + ADP(in) = dATP(in) + ADP(out)</text>
        <dbReference type="Rhea" id="RHEA:73699"/>
        <dbReference type="ChEBI" id="CHEBI:61404"/>
        <dbReference type="ChEBI" id="CHEBI:456216"/>
    </reaction>
    <physiologicalReaction direction="left-to-right" evidence="5">
        <dbReference type="Rhea" id="RHEA:73700"/>
    </physiologicalReaction>
    <physiologicalReaction direction="right-to-left" evidence="5">
        <dbReference type="Rhea" id="RHEA:73701"/>
    </physiologicalReaction>
</comment>
<comment type="catalytic activity">
    <reaction evidence="5">
        <text>dADP(in) + ADP(out) = dADP(out) + ADP(in)</text>
        <dbReference type="Rhea" id="RHEA:72855"/>
        <dbReference type="ChEBI" id="CHEBI:57667"/>
        <dbReference type="ChEBI" id="CHEBI:456216"/>
    </reaction>
    <physiologicalReaction direction="left-to-right" evidence="5">
        <dbReference type="Rhea" id="RHEA:72856"/>
    </physiologicalReaction>
    <physiologicalReaction direction="right-to-left" evidence="5">
        <dbReference type="Rhea" id="RHEA:72857"/>
    </physiologicalReaction>
</comment>
<comment type="catalytic activity">
    <reaction evidence="4">
        <text>H(+)(in) = H(+)(out)</text>
        <dbReference type="Rhea" id="RHEA:34979"/>
        <dbReference type="ChEBI" id="CHEBI:15378"/>
    </reaction>
</comment>
<comment type="activity regulation">
    <text evidence="1 4">The matrix-open state (m-state) is inhibited by the membrane-permeable bongkrekic acid (BKA). The cytoplasmic-open state (c-state) is inhibited by the membrane-impermeable toxic inhibitor carboxyatractyloside (CATR) (By similarity). Proton transporter activity is inhibited by ADP:ATP antiporter activity (By similarity).</text>
</comment>
<comment type="subunit">
    <text evidence="1 2">Monomer.</text>
</comment>
<comment type="subcellular location">
    <subcellularLocation>
        <location evidence="2 5">Mitochondrion inner membrane</location>
        <topology evidence="6">Multi-pass membrane protein</topology>
    </subcellularLocation>
    <subcellularLocation>
        <location evidence="5">Membrane</location>
        <topology evidence="6">Multi-pass membrane protein</topology>
    </subcellularLocation>
    <subcellularLocation>
        <location evidence="8">Cell projection</location>
        <location evidence="8">Cilium</location>
        <location evidence="8">Flagellum membrane</location>
        <topology evidence="6">Multi-pass membrane protein</topology>
    </subcellularLocation>
    <text evidence="5">In sperm flagellum this protein is located in the fibrous sheath, a non-mitochondrial region (By similarity). May localize to non-mitochondrial membranes (By similarity).</text>
</comment>
<comment type="tissue specificity">
    <text evidence="7 9 12">Specifically expressed in undifferentiated embryonic stem cells and germ cells (PubMed:16051982, PubMed:31489369). Expression is down-regulated after embryonic stem cells differentiation (PubMed:16051982). In adults, only expressed in developing gametes in testis (PubMed:16051982). In testis, expressed at higher level in spermatocytes. Expression is probably associated with entry of the male germ cells into meiosis (PubMed:17681941). Expressed at very low level in Sertoli cells (PubMed:17681941).</text>
</comment>
<comment type="developmental stage">
    <text evidence="9">In testis, expression increases upon transition of premeiotic type B spermatogonia into the early stages of meiosis as represented by preleptotene spermatocytes (PubMed:17681941). Continues to increase through the leptotene and zygotene spermatocyte stages, peaking in early pachytene spermatocytes (PubMed:17681941). Expression decreases in late pachytene spermatocytes and in later round spermatids (PubMed:17681941).</text>
</comment>
<comment type="induction">
    <text evidence="10">Expression is repressed by E2F6.</text>
</comment>
<comment type="domain">
    <text evidence="2">The transmembrane helices are not perpendicular to the plane of the membrane, but cross the membrane at an angle. Odd-numbered transmembrane helices exhibit a sharp kink, due to the presence of a conserved proline residue.</text>
</comment>
<comment type="disruption phenotype">
    <text evidence="9 11 12">Male mice display a significant reduction in testicular size and are sterile, due to impaired spermatogenesis (PubMed:17681941). Males show increased levels of apoptosis within the spermatocyte layer of the seminiferous epithelium, accompanied by the absence of spermatids and spermatozoa within the seminiferous epithelium and lumen respectively (PubMed:17681941). Early meiotic arrest: an accumulation of leptotene spermatocytes, a decrease in pachytene spermatocytes and an absence of diplotene spermatocytes are observed in spermatocytes (PubMed:19556438). Deletion of Slc25a4/Ant1, Slc25a5/Ant2 and Slc25a31/Ant4 in liver completely inhibits mitochondrial permeability transition pore (mPTP) (PubMed:31489369). Mice lacking Slc25a4/Ant1, Slc25a5/Ant2, Slc25a31/Ant4 and Ppif lack Ca(2+)-induced mPTP formation (PubMed:31489369).</text>
</comment>
<comment type="similarity">
    <text evidence="16">Belongs to the mitochondrial carrier (TC 2.A.29) family.</text>
</comment>
<proteinExistence type="evidence at protein level"/>
<organism>
    <name type="scientific">Mus musculus</name>
    <name type="common">Mouse</name>
    <dbReference type="NCBI Taxonomy" id="10090"/>
    <lineage>
        <taxon>Eukaryota</taxon>
        <taxon>Metazoa</taxon>
        <taxon>Chordata</taxon>
        <taxon>Craniata</taxon>
        <taxon>Vertebrata</taxon>
        <taxon>Euteleostomi</taxon>
        <taxon>Mammalia</taxon>
        <taxon>Eutheria</taxon>
        <taxon>Euarchontoglires</taxon>
        <taxon>Glires</taxon>
        <taxon>Rodentia</taxon>
        <taxon>Myomorpha</taxon>
        <taxon>Muroidea</taxon>
        <taxon>Muridae</taxon>
        <taxon>Murinae</taxon>
        <taxon>Mus</taxon>
        <taxon>Mus</taxon>
    </lineage>
</organism>